<gene>
    <name type="primary">rnf41</name>
    <name type="synonym">nrdp1</name>
    <name type="ORF">zgc:55389</name>
</gene>
<accession>Q7ZW16</accession>
<proteinExistence type="evidence at transcript level"/>
<evidence type="ECO:0000250" key="1">
    <source>
        <dbReference type="UniProtKB" id="Q9H4P4"/>
    </source>
</evidence>
<evidence type="ECO:0000255" key="2">
    <source>
        <dbReference type="PROSITE-ProRule" id="PRU00175"/>
    </source>
</evidence>
<evidence type="ECO:0000255" key="3">
    <source>
        <dbReference type="PROSITE-ProRule" id="PRU00455"/>
    </source>
</evidence>
<evidence type="ECO:0000305" key="4"/>
<comment type="function">
    <text evidence="1">Acts as E3 ubiquitin-protein ligase and regulates the degradation of target proteins.</text>
</comment>
<comment type="catalytic activity">
    <reaction>
        <text>S-ubiquitinyl-[E2 ubiquitin-conjugating enzyme]-L-cysteine + [acceptor protein]-L-lysine = [E2 ubiquitin-conjugating enzyme]-L-cysteine + N(6)-ubiquitinyl-[acceptor protein]-L-lysine.</text>
        <dbReference type="EC" id="2.3.2.27"/>
    </reaction>
</comment>
<comment type="pathway">
    <text>Protein modification; protein ubiquitination.</text>
</comment>
<organism>
    <name type="scientific">Danio rerio</name>
    <name type="common">Zebrafish</name>
    <name type="synonym">Brachydanio rerio</name>
    <dbReference type="NCBI Taxonomy" id="7955"/>
    <lineage>
        <taxon>Eukaryota</taxon>
        <taxon>Metazoa</taxon>
        <taxon>Chordata</taxon>
        <taxon>Craniata</taxon>
        <taxon>Vertebrata</taxon>
        <taxon>Euteleostomi</taxon>
        <taxon>Actinopterygii</taxon>
        <taxon>Neopterygii</taxon>
        <taxon>Teleostei</taxon>
        <taxon>Ostariophysi</taxon>
        <taxon>Cypriniformes</taxon>
        <taxon>Danionidae</taxon>
        <taxon>Danioninae</taxon>
        <taxon>Danio</taxon>
    </lineage>
</organism>
<dbReference type="EC" id="2.3.2.27"/>
<dbReference type="EMBL" id="BC045329">
    <property type="protein sequence ID" value="AAH45329.1"/>
    <property type="molecule type" value="mRNA"/>
</dbReference>
<dbReference type="RefSeq" id="NP_998681.1">
    <property type="nucleotide sequence ID" value="NM_213516.1"/>
</dbReference>
<dbReference type="SMR" id="Q7ZW16"/>
<dbReference type="FunCoup" id="Q7ZW16">
    <property type="interactions" value="1501"/>
</dbReference>
<dbReference type="STRING" id="7955.ENSDARP00000053471"/>
<dbReference type="PaxDb" id="7955-ENSDARP00000053471"/>
<dbReference type="GeneID" id="406837"/>
<dbReference type="KEGG" id="dre:406837"/>
<dbReference type="AGR" id="ZFIN:ZDB-GENE-040426-2920"/>
<dbReference type="CTD" id="10193"/>
<dbReference type="ZFIN" id="ZDB-GENE-040426-2920">
    <property type="gene designation" value="rnf41"/>
</dbReference>
<dbReference type="eggNOG" id="KOG0297">
    <property type="taxonomic scope" value="Eukaryota"/>
</dbReference>
<dbReference type="InParanoid" id="Q7ZW16"/>
<dbReference type="OrthoDB" id="1630758at2759"/>
<dbReference type="PhylomeDB" id="Q7ZW16"/>
<dbReference type="Reactome" id="R-DRE-1358803">
    <property type="pathway name" value="Downregulation of ERBB2:ERBB3 signaling"/>
</dbReference>
<dbReference type="Reactome" id="R-DRE-983168">
    <property type="pathway name" value="Antigen processing: Ubiquitination &amp; Proteasome degradation"/>
</dbReference>
<dbReference type="UniPathway" id="UPA00143"/>
<dbReference type="PRO" id="PR:Q7ZW16"/>
<dbReference type="Proteomes" id="UP000000437">
    <property type="component" value="Alternate scaffold 23"/>
</dbReference>
<dbReference type="Proteomes" id="UP000000437">
    <property type="component" value="Chromosome 23"/>
</dbReference>
<dbReference type="GO" id="GO:0071782">
    <property type="term" value="C:endoplasmic reticulum tubular network"/>
    <property type="evidence" value="ECO:0000318"/>
    <property type="project" value="GO_Central"/>
</dbReference>
<dbReference type="GO" id="GO:0061630">
    <property type="term" value="F:ubiquitin protein ligase activity"/>
    <property type="evidence" value="ECO:0007669"/>
    <property type="project" value="InterPro"/>
</dbReference>
<dbReference type="GO" id="GO:0004842">
    <property type="term" value="F:ubiquitin-protein transferase activity"/>
    <property type="evidence" value="ECO:0000250"/>
    <property type="project" value="UniProtKB"/>
</dbReference>
<dbReference type="GO" id="GO:0008270">
    <property type="term" value="F:zinc ion binding"/>
    <property type="evidence" value="ECO:0007669"/>
    <property type="project" value="UniProtKB-KW"/>
</dbReference>
<dbReference type="GO" id="GO:0097191">
    <property type="term" value="P:extrinsic apoptotic signaling pathway"/>
    <property type="evidence" value="ECO:0000250"/>
    <property type="project" value="UniProtKB"/>
</dbReference>
<dbReference type="GO" id="GO:0030318">
    <property type="term" value="P:melanocyte differentiation"/>
    <property type="evidence" value="ECO:0000315"/>
    <property type="project" value="ZFIN"/>
</dbReference>
<dbReference type="GO" id="GO:0000209">
    <property type="term" value="P:protein polyubiquitination"/>
    <property type="evidence" value="ECO:0000250"/>
    <property type="project" value="UniProtKB"/>
</dbReference>
<dbReference type="CDD" id="cd16634">
    <property type="entry name" value="mRING-HC-C3HC3D_Nrdp1"/>
    <property type="match status" value="1"/>
</dbReference>
<dbReference type="FunFam" id="3.30.40.10:FF:000268">
    <property type="entry name" value="E3 ubiquitin-protein ligase NRDP1"/>
    <property type="match status" value="1"/>
</dbReference>
<dbReference type="FunFam" id="3.30.40.10:FF:000302">
    <property type="entry name" value="E3 ubiquitin-protein ligase NRDP1"/>
    <property type="match status" value="1"/>
</dbReference>
<dbReference type="Gene3D" id="3.30.40.10">
    <property type="entry name" value="Zinc/RING finger domain, C3HC4 (zinc finger)"/>
    <property type="match status" value="2"/>
</dbReference>
<dbReference type="InterPro" id="IPR015036">
    <property type="entry name" value="NRDP1"/>
</dbReference>
<dbReference type="InterPro" id="IPR037255">
    <property type="entry name" value="NRDP1_C"/>
</dbReference>
<dbReference type="InterPro" id="IPR001841">
    <property type="entry name" value="Znf_RING"/>
</dbReference>
<dbReference type="InterPro" id="IPR013083">
    <property type="entry name" value="Znf_RING/FYVE/PHD"/>
</dbReference>
<dbReference type="InterPro" id="IPR017907">
    <property type="entry name" value="Znf_RING_CS"/>
</dbReference>
<dbReference type="InterPro" id="IPR013010">
    <property type="entry name" value="Znf_SIAH"/>
</dbReference>
<dbReference type="PANTHER" id="PTHR10131:SF157">
    <property type="entry name" value="RECEPTOR-ASSOCIATED FACTOR, PUTATIVE-RELATED"/>
    <property type="match status" value="1"/>
</dbReference>
<dbReference type="PANTHER" id="PTHR10131">
    <property type="entry name" value="TNF RECEPTOR ASSOCIATED FACTOR"/>
    <property type="match status" value="1"/>
</dbReference>
<dbReference type="Pfam" id="PF08941">
    <property type="entry name" value="USP8_interact"/>
    <property type="match status" value="1"/>
</dbReference>
<dbReference type="Pfam" id="PF13923">
    <property type="entry name" value="zf-C3HC4_2"/>
    <property type="match status" value="1"/>
</dbReference>
<dbReference type="SMART" id="SM00184">
    <property type="entry name" value="RING"/>
    <property type="match status" value="1"/>
</dbReference>
<dbReference type="SUPFAM" id="SSF160088">
    <property type="entry name" value="NRDP1 C-terminal domain-like"/>
    <property type="match status" value="1"/>
</dbReference>
<dbReference type="SUPFAM" id="SSF57850">
    <property type="entry name" value="RING/U-box"/>
    <property type="match status" value="1"/>
</dbReference>
<dbReference type="SUPFAM" id="SSF49599">
    <property type="entry name" value="TRAF domain-like"/>
    <property type="match status" value="1"/>
</dbReference>
<dbReference type="PROSITE" id="PS00518">
    <property type="entry name" value="ZF_RING_1"/>
    <property type="match status" value="1"/>
</dbReference>
<dbReference type="PROSITE" id="PS50089">
    <property type="entry name" value="ZF_RING_2"/>
    <property type="match status" value="1"/>
</dbReference>
<dbReference type="PROSITE" id="PS51081">
    <property type="entry name" value="ZF_SIAH"/>
    <property type="match status" value="1"/>
</dbReference>
<sequence length="318" mass="36128">MGYDVTRFQGEVDEDLLCPICSGVLEEPVRAPHCEHAFCNACITQWFAQQQICPVDRTVVTLAHLRPVPRIMRNMLSKLQISCDNAGFGCTATLRLDQLQSHLKDCEHNPKRPVTCEEGCGLEMPKDEMPNHNCIKHLRSVVQQQQTKIADLEKTAAEHKHQLAEQKRDIQLLKAYMRAIRSANPNLQNLEESIEYNEILEWVNSLQPARVTRWGGMISTPDAVLQAVIKRSLIDSGCPLSIVNDLIENAHERNWPQGLATLETRQMNRRYYENYVAKRIPGKQAVVVMACENQHMGEDMILEPGLVMIFAHGVEEIL</sequence>
<name>RNF41_DANRE</name>
<reference key="1">
    <citation type="submission" date="2003-01" db="EMBL/GenBank/DDBJ databases">
        <authorList>
            <consortium name="NIH - Zebrafish Gene Collection (ZGC) project"/>
        </authorList>
    </citation>
    <scope>NUCLEOTIDE SEQUENCE [LARGE SCALE MRNA]</scope>
    <source>
        <strain>AB</strain>
        <tissue>Embryo</tissue>
    </source>
</reference>
<protein>
    <recommendedName>
        <fullName>E3 ubiquitin-protein ligase NRDP1</fullName>
        <ecNumber>2.3.2.27</ecNumber>
    </recommendedName>
    <alternativeName>
        <fullName>RING finger protein 41</fullName>
    </alternativeName>
    <alternativeName>
        <fullName evidence="4">RING-type E3 ubiquitin transferase NRDP1</fullName>
    </alternativeName>
</protein>
<feature type="chain" id="PRO_0000223956" description="E3 ubiquitin-protein ligase NRDP1">
    <location>
        <begin position="1"/>
        <end position="318"/>
    </location>
</feature>
<feature type="zinc finger region" description="RING-type; degenerate" evidence="2">
    <location>
        <begin position="18"/>
        <end position="57"/>
    </location>
</feature>
<feature type="zinc finger region" description="SIAH-type; degenerate" evidence="3">
    <location>
        <begin position="78"/>
        <end position="138"/>
    </location>
</feature>
<keyword id="KW-0479">Metal-binding</keyword>
<keyword id="KW-1185">Reference proteome</keyword>
<keyword id="KW-0808">Transferase</keyword>
<keyword id="KW-0833">Ubl conjugation pathway</keyword>
<keyword id="KW-0862">Zinc</keyword>
<keyword id="KW-0863">Zinc-finger</keyword>